<name>DGTL1_VIBC1</name>
<proteinExistence type="inferred from homology"/>
<protein>
    <recommendedName>
        <fullName evidence="1">Deoxyguanosinetriphosphate triphosphohydrolase-like protein</fullName>
    </recommendedName>
</protein>
<dbReference type="EMBL" id="CP000789">
    <property type="protein sequence ID" value="ABU70400.1"/>
    <property type="molecule type" value="Genomic_DNA"/>
</dbReference>
<dbReference type="SMR" id="A7MZR6"/>
<dbReference type="KEGG" id="vha:VIBHAR_01425"/>
<dbReference type="PATRIC" id="fig|338187.36.peg.1348"/>
<dbReference type="Proteomes" id="UP000008152">
    <property type="component" value="Chromosome I"/>
</dbReference>
<dbReference type="GO" id="GO:0008832">
    <property type="term" value="F:dGTPase activity"/>
    <property type="evidence" value="ECO:0007669"/>
    <property type="project" value="TreeGrafter"/>
</dbReference>
<dbReference type="GO" id="GO:0006203">
    <property type="term" value="P:dGTP catabolic process"/>
    <property type="evidence" value="ECO:0007669"/>
    <property type="project" value="TreeGrafter"/>
</dbReference>
<dbReference type="Gene3D" id="1.10.3210.10">
    <property type="entry name" value="Hypothetical protein af1432"/>
    <property type="match status" value="1"/>
</dbReference>
<dbReference type="HAMAP" id="MF_01212">
    <property type="entry name" value="dGTPase_type2"/>
    <property type="match status" value="1"/>
</dbReference>
<dbReference type="InterPro" id="IPR006261">
    <property type="entry name" value="dGTPase"/>
</dbReference>
<dbReference type="InterPro" id="IPR050135">
    <property type="entry name" value="dGTPase-like"/>
</dbReference>
<dbReference type="InterPro" id="IPR023023">
    <property type="entry name" value="dNTPase_2"/>
</dbReference>
<dbReference type="InterPro" id="IPR003607">
    <property type="entry name" value="HD/PDEase_dom"/>
</dbReference>
<dbReference type="InterPro" id="IPR006674">
    <property type="entry name" value="HD_domain"/>
</dbReference>
<dbReference type="InterPro" id="IPR026875">
    <property type="entry name" value="PHydrolase_assoc_dom"/>
</dbReference>
<dbReference type="NCBIfam" id="NF041026">
    <property type="entry name" value="antiphage_dGTPase"/>
    <property type="match status" value="1"/>
</dbReference>
<dbReference type="NCBIfam" id="TIGR01353">
    <property type="entry name" value="dGTP_triPase"/>
    <property type="match status" value="1"/>
</dbReference>
<dbReference type="NCBIfam" id="NF003701">
    <property type="entry name" value="PRK05318.1"/>
    <property type="match status" value="1"/>
</dbReference>
<dbReference type="PANTHER" id="PTHR11373:SF40">
    <property type="entry name" value="DEOXYGUANOSINETRIPHOSPHATE TRIPHOSPHOHYDROLASE-LIKE PROTEIN 2"/>
    <property type="match status" value="1"/>
</dbReference>
<dbReference type="PANTHER" id="PTHR11373">
    <property type="entry name" value="DEOXYNUCLEOSIDE TRIPHOSPHATE TRIPHOSPHOHYDROLASE"/>
    <property type="match status" value="1"/>
</dbReference>
<dbReference type="Pfam" id="PF01966">
    <property type="entry name" value="HD"/>
    <property type="match status" value="1"/>
</dbReference>
<dbReference type="Pfam" id="PF13286">
    <property type="entry name" value="HD_assoc"/>
    <property type="match status" value="1"/>
</dbReference>
<dbReference type="SMART" id="SM00471">
    <property type="entry name" value="HDc"/>
    <property type="match status" value="1"/>
</dbReference>
<dbReference type="SUPFAM" id="SSF109604">
    <property type="entry name" value="HD-domain/PDEase-like"/>
    <property type="match status" value="1"/>
</dbReference>
<dbReference type="PROSITE" id="PS51831">
    <property type="entry name" value="HD"/>
    <property type="match status" value="1"/>
</dbReference>
<sequence>MERKVSFELDALWQERHDDEHKIRRDDHRSPYQRDRARILHSAAFRRLQAKTQVHGNSLEDFHRTRLTHSLEAAQLGTGIVAQLKKKQPEFRDLLPSDSLIDSLCLAHDIGHPPYGHGGEVALNYMMREHGGFEGNAQTFRIVTKLEPYTEHFGMNLSRRALLGLIKYPALLSQTRAVCLPKPVEHQRKLKAKDWSPAKGIYDCDKDLFDWVIAPLTDNDKALLSQMRCRPESDFEHCKTRFKSLDCSIMELADDIAYGVHDLEDAIVLGMVTRQQWQEGAASQLADCGDAWFEEHIGSIGQMLFSGKHHERKDAIGGMVNALLTSISIKVVDEPFSNPLLAWNACLEPQMAKALEVLKHFVSKYVIQVHQVQIVEYKGQQIIMDLFEALSADPERLLPTHTQALWQEVANESAKMRVIADYISAMTDGHAQKLHRQLFSSIVL</sequence>
<reference key="1">
    <citation type="submission" date="2007-08" db="EMBL/GenBank/DDBJ databases">
        <authorList>
            <consortium name="The Vibrio harveyi Genome Sequencing Project"/>
            <person name="Bassler B."/>
            <person name="Clifton S.W."/>
            <person name="Fulton L."/>
            <person name="Delehaunty K."/>
            <person name="Fronick C."/>
            <person name="Harrison M."/>
            <person name="Markivic C."/>
            <person name="Fulton R."/>
            <person name="Tin-Wollam A.-M."/>
            <person name="Shah N."/>
            <person name="Pepin K."/>
            <person name="Nash W."/>
            <person name="Thiruvilangam P."/>
            <person name="Bhonagiri V."/>
            <person name="Waters C."/>
            <person name="Tu K.C."/>
            <person name="Irgon J."/>
            <person name="Wilson R.K."/>
        </authorList>
    </citation>
    <scope>NUCLEOTIDE SEQUENCE [LARGE SCALE GENOMIC DNA]</scope>
    <source>
        <strain>ATCC BAA-1116 / BB120</strain>
    </source>
</reference>
<organism>
    <name type="scientific">Vibrio campbellii (strain ATCC BAA-1116)</name>
    <dbReference type="NCBI Taxonomy" id="2902295"/>
    <lineage>
        <taxon>Bacteria</taxon>
        <taxon>Pseudomonadati</taxon>
        <taxon>Pseudomonadota</taxon>
        <taxon>Gammaproteobacteria</taxon>
        <taxon>Vibrionales</taxon>
        <taxon>Vibrionaceae</taxon>
        <taxon>Vibrio</taxon>
    </lineage>
</organism>
<evidence type="ECO:0000255" key="1">
    <source>
        <dbReference type="HAMAP-Rule" id="MF_01212"/>
    </source>
</evidence>
<evidence type="ECO:0000255" key="2">
    <source>
        <dbReference type="PROSITE-ProRule" id="PRU01175"/>
    </source>
</evidence>
<gene>
    <name type="ordered locus">VIBHAR_01425</name>
</gene>
<accession>A7MZR6</accession>
<feature type="chain" id="PRO_1000066445" description="Deoxyguanosinetriphosphate triphosphohydrolase-like protein">
    <location>
        <begin position="1"/>
        <end position="444"/>
    </location>
</feature>
<feature type="domain" description="HD" evidence="2">
    <location>
        <begin position="66"/>
        <end position="259"/>
    </location>
</feature>
<comment type="similarity">
    <text evidence="1">Belongs to the dGTPase family. Type 2 subfamily.</text>
</comment>
<keyword id="KW-0378">Hydrolase</keyword>